<name>GLGB_METCA</name>
<dbReference type="EC" id="2.4.1.18" evidence="1"/>
<dbReference type="EMBL" id="AE017282">
    <property type="protein sequence ID" value="AAU92509.1"/>
    <property type="molecule type" value="Genomic_DNA"/>
</dbReference>
<dbReference type="RefSeq" id="WP_010960751.1">
    <property type="nucleotide sequence ID" value="NC_002977.6"/>
</dbReference>
<dbReference type="SMR" id="Q608L5"/>
<dbReference type="STRING" id="243233.MCA1475"/>
<dbReference type="CAZy" id="CBM48">
    <property type="family name" value="Carbohydrate-Binding Module Family 48"/>
</dbReference>
<dbReference type="CAZy" id="GH13">
    <property type="family name" value="Glycoside Hydrolase Family 13"/>
</dbReference>
<dbReference type="GeneID" id="88223748"/>
<dbReference type="KEGG" id="mca:MCA1475"/>
<dbReference type="eggNOG" id="COG0296">
    <property type="taxonomic scope" value="Bacteria"/>
</dbReference>
<dbReference type="HOGENOM" id="CLU_004245_3_2_6"/>
<dbReference type="UniPathway" id="UPA00164"/>
<dbReference type="Proteomes" id="UP000006821">
    <property type="component" value="Chromosome"/>
</dbReference>
<dbReference type="GO" id="GO:0005829">
    <property type="term" value="C:cytosol"/>
    <property type="evidence" value="ECO:0007669"/>
    <property type="project" value="TreeGrafter"/>
</dbReference>
<dbReference type="GO" id="GO:0003844">
    <property type="term" value="F:1,4-alpha-glucan branching enzyme activity"/>
    <property type="evidence" value="ECO:0007669"/>
    <property type="project" value="UniProtKB-UniRule"/>
</dbReference>
<dbReference type="GO" id="GO:0043169">
    <property type="term" value="F:cation binding"/>
    <property type="evidence" value="ECO:0007669"/>
    <property type="project" value="InterPro"/>
</dbReference>
<dbReference type="GO" id="GO:0004553">
    <property type="term" value="F:hydrolase activity, hydrolyzing O-glycosyl compounds"/>
    <property type="evidence" value="ECO:0007669"/>
    <property type="project" value="InterPro"/>
</dbReference>
<dbReference type="GO" id="GO:0005978">
    <property type="term" value="P:glycogen biosynthetic process"/>
    <property type="evidence" value="ECO:0007669"/>
    <property type="project" value="UniProtKB-UniRule"/>
</dbReference>
<dbReference type="CDD" id="cd11322">
    <property type="entry name" value="AmyAc_Glg_BE"/>
    <property type="match status" value="1"/>
</dbReference>
<dbReference type="CDD" id="cd02855">
    <property type="entry name" value="E_set_GBE_prok_N"/>
    <property type="match status" value="1"/>
</dbReference>
<dbReference type="FunFam" id="2.60.40.10:FF:000169">
    <property type="entry name" value="1,4-alpha-glucan branching enzyme GlgB"/>
    <property type="match status" value="1"/>
</dbReference>
<dbReference type="FunFam" id="2.60.40.1180:FF:000002">
    <property type="entry name" value="1,4-alpha-glucan branching enzyme GlgB"/>
    <property type="match status" value="1"/>
</dbReference>
<dbReference type="FunFam" id="3.20.20.80:FF:000003">
    <property type="entry name" value="1,4-alpha-glucan branching enzyme GlgB"/>
    <property type="match status" value="1"/>
</dbReference>
<dbReference type="Gene3D" id="3.20.20.80">
    <property type="entry name" value="Glycosidases"/>
    <property type="match status" value="1"/>
</dbReference>
<dbReference type="Gene3D" id="2.60.40.1180">
    <property type="entry name" value="Golgi alpha-mannosidase II"/>
    <property type="match status" value="1"/>
</dbReference>
<dbReference type="Gene3D" id="2.60.40.10">
    <property type="entry name" value="Immunoglobulins"/>
    <property type="match status" value="1"/>
</dbReference>
<dbReference type="HAMAP" id="MF_00685">
    <property type="entry name" value="GlgB"/>
    <property type="match status" value="1"/>
</dbReference>
<dbReference type="InterPro" id="IPR006048">
    <property type="entry name" value="A-amylase/branching_C"/>
</dbReference>
<dbReference type="InterPro" id="IPR037439">
    <property type="entry name" value="Branching_enzy"/>
</dbReference>
<dbReference type="InterPro" id="IPR006407">
    <property type="entry name" value="GlgB"/>
</dbReference>
<dbReference type="InterPro" id="IPR054169">
    <property type="entry name" value="GlgB_N"/>
</dbReference>
<dbReference type="InterPro" id="IPR044143">
    <property type="entry name" value="GlgB_N_E_set_prok"/>
</dbReference>
<dbReference type="InterPro" id="IPR006047">
    <property type="entry name" value="Glyco_hydro_13_cat_dom"/>
</dbReference>
<dbReference type="InterPro" id="IPR004193">
    <property type="entry name" value="Glyco_hydro_13_N"/>
</dbReference>
<dbReference type="InterPro" id="IPR013780">
    <property type="entry name" value="Glyco_hydro_b"/>
</dbReference>
<dbReference type="InterPro" id="IPR017853">
    <property type="entry name" value="Glycoside_hydrolase_SF"/>
</dbReference>
<dbReference type="InterPro" id="IPR013783">
    <property type="entry name" value="Ig-like_fold"/>
</dbReference>
<dbReference type="InterPro" id="IPR014756">
    <property type="entry name" value="Ig_E-set"/>
</dbReference>
<dbReference type="NCBIfam" id="TIGR01515">
    <property type="entry name" value="branching_enzym"/>
    <property type="match status" value="1"/>
</dbReference>
<dbReference type="NCBIfam" id="NF003811">
    <property type="entry name" value="PRK05402.1"/>
    <property type="match status" value="1"/>
</dbReference>
<dbReference type="NCBIfam" id="NF008967">
    <property type="entry name" value="PRK12313.1"/>
    <property type="match status" value="1"/>
</dbReference>
<dbReference type="PANTHER" id="PTHR43651">
    <property type="entry name" value="1,4-ALPHA-GLUCAN-BRANCHING ENZYME"/>
    <property type="match status" value="1"/>
</dbReference>
<dbReference type="PANTHER" id="PTHR43651:SF3">
    <property type="entry name" value="1,4-ALPHA-GLUCAN-BRANCHING ENZYME"/>
    <property type="match status" value="1"/>
</dbReference>
<dbReference type="Pfam" id="PF00128">
    <property type="entry name" value="Alpha-amylase"/>
    <property type="match status" value="2"/>
</dbReference>
<dbReference type="Pfam" id="PF02806">
    <property type="entry name" value="Alpha-amylase_C"/>
    <property type="match status" value="1"/>
</dbReference>
<dbReference type="Pfam" id="PF02922">
    <property type="entry name" value="CBM_48"/>
    <property type="match status" value="1"/>
</dbReference>
<dbReference type="Pfam" id="PF22019">
    <property type="entry name" value="GlgB_N"/>
    <property type="match status" value="1"/>
</dbReference>
<dbReference type="PIRSF" id="PIRSF000463">
    <property type="entry name" value="GlgB"/>
    <property type="match status" value="1"/>
</dbReference>
<dbReference type="SMART" id="SM00642">
    <property type="entry name" value="Aamy"/>
    <property type="match status" value="1"/>
</dbReference>
<dbReference type="SUPFAM" id="SSF51445">
    <property type="entry name" value="(Trans)glycosidases"/>
    <property type="match status" value="1"/>
</dbReference>
<dbReference type="SUPFAM" id="SSF81296">
    <property type="entry name" value="E set domains"/>
    <property type="match status" value="2"/>
</dbReference>
<dbReference type="SUPFAM" id="SSF51011">
    <property type="entry name" value="Glycosyl hydrolase domain"/>
    <property type="match status" value="1"/>
</dbReference>
<evidence type="ECO:0000255" key="1">
    <source>
        <dbReference type="HAMAP-Rule" id="MF_00685"/>
    </source>
</evidence>
<sequence>MTDSSTLAELSPDFQRIVEARHHDPFAVLGRHRRDNRDLIRAFLPQAEEVRVGSAGRVMERIAGTAIFECEVEAETTDLHYRLYWTDQTGQTHSFIDPYTFPPRLSDFDLYLFGEGRHWNIYRVLGAHPHSVDGIDGILFATWAPNAERISVVGEFNGWDGRRHPMRVRGASGVWELFIPELQPGLLYKFEIRNRAHGTIHLKSDPYGRQFELRPNTASIITRESGYAWNDADWLAQRKDWPWLHRPLSVYEMHAGSWKRDLEGGYLNYRDLAHELVDYVKSAGFSHIELMPVTEHPLDASWGYQTTGYFAPTSRFGTPDDFRYFVDHCHRNGIGVILDWVPAHFPKDAHGLARFDGTALYEHEDPRLGEHRDWGTLIYNYGRNEVKNFLLGSALFWLEEFHLDGLRVDAVASMLYLDYSRQPGDWIPNKYGGNENLEAIAFLRDLNTVVHQQFPGVLVIAEESTAWPQVTRPTWTGGLGFSMKWNMGWMHDILVYMGKDPVHRHYHHDQLTFGLLYAFTENFVLPFSHDEVVHGKGSMLAKMPGDEWRRFANLRVLYTMMFTYPGKKLLFMGCEFAQTGEWNHTTALDWPLLESNLHKGVLHLVSDLNRLYQSTSALYAYDFESQGFEWIDSHDAAQSVISYVRRDDDSHVVVVLNFTPVPRHNYRIGVPEPVGYREVFNSDAECYGGANLGNWEIKTESVEWMGRAQSVVLTLPPLAGIVLAPVAPSATPDCGTPGDE</sequence>
<reference key="1">
    <citation type="journal article" date="2004" name="PLoS Biol.">
        <title>Genomic insights into methanotrophy: the complete genome sequence of Methylococcus capsulatus (Bath).</title>
        <authorList>
            <person name="Ward N.L."/>
            <person name="Larsen O."/>
            <person name="Sakwa J."/>
            <person name="Bruseth L."/>
            <person name="Khouri H.M."/>
            <person name="Durkin A.S."/>
            <person name="Dimitrov G."/>
            <person name="Jiang L."/>
            <person name="Scanlan D."/>
            <person name="Kang K.H."/>
            <person name="Lewis M.R."/>
            <person name="Nelson K.E."/>
            <person name="Methe B.A."/>
            <person name="Wu M."/>
            <person name="Heidelberg J.F."/>
            <person name="Paulsen I.T."/>
            <person name="Fouts D.E."/>
            <person name="Ravel J."/>
            <person name="Tettelin H."/>
            <person name="Ren Q."/>
            <person name="Read T.D."/>
            <person name="DeBoy R.T."/>
            <person name="Seshadri R."/>
            <person name="Salzberg S.L."/>
            <person name="Jensen H.B."/>
            <person name="Birkeland N.K."/>
            <person name="Nelson W.C."/>
            <person name="Dodson R.J."/>
            <person name="Grindhaug S.H."/>
            <person name="Holt I.E."/>
            <person name="Eidhammer I."/>
            <person name="Jonasen I."/>
            <person name="Vanaken S."/>
            <person name="Utterback T.R."/>
            <person name="Feldblyum T.V."/>
            <person name="Fraser C.M."/>
            <person name="Lillehaug J.R."/>
            <person name="Eisen J.A."/>
        </authorList>
    </citation>
    <scope>NUCLEOTIDE SEQUENCE [LARGE SCALE GENOMIC DNA]</scope>
    <source>
        <strain>ATCC 33009 / NCIMB 11132 / Bath</strain>
    </source>
</reference>
<accession>Q608L5</accession>
<feature type="chain" id="PRO_0000188715" description="1,4-alpha-glucan branching enzyme GlgB">
    <location>
        <begin position="1"/>
        <end position="740"/>
    </location>
</feature>
<feature type="active site" description="Nucleophile" evidence="1">
    <location>
        <position position="409"/>
    </location>
</feature>
<feature type="active site" description="Proton donor" evidence="1">
    <location>
        <position position="462"/>
    </location>
</feature>
<comment type="function">
    <text evidence="1">Catalyzes the formation of the alpha-1,6-glucosidic linkages in glycogen by scission of a 1,4-alpha-linked oligosaccharide from growing alpha-1,4-glucan chains and the subsequent attachment of the oligosaccharide to the alpha-1,6 position.</text>
</comment>
<comment type="catalytic activity">
    <reaction evidence="1">
        <text>Transfers a segment of a (1-&gt;4)-alpha-D-glucan chain to a primary hydroxy group in a similar glucan chain.</text>
        <dbReference type="EC" id="2.4.1.18"/>
    </reaction>
</comment>
<comment type="pathway">
    <text evidence="1">Glycan biosynthesis; glycogen biosynthesis.</text>
</comment>
<comment type="subunit">
    <text evidence="1">Monomer.</text>
</comment>
<comment type="similarity">
    <text evidence="1">Belongs to the glycosyl hydrolase 13 family. GlgB subfamily.</text>
</comment>
<gene>
    <name evidence="1" type="primary">glgB</name>
    <name type="ordered locus">MCA1475</name>
</gene>
<protein>
    <recommendedName>
        <fullName evidence="1">1,4-alpha-glucan branching enzyme GlgB</fullName>
        <ecNumber evidence="1">2.4.1.18</ecNumber>
    </recommendedName>
    <alternativeName>
        <fullName evidence="1">1,4-alpha-D-glucan:1,4-alpha-D-glucan 6-glucosyl-transferase</fullName>
    </alternativeName>
    <alternativeName>
        <fullName evidence="1">Alpha-(1-&gt;4)-glucan branching enzyme</fullName>
    </alternativeName>
    <alternativeName>
        <fullName evidence="1">Glycogen branching enzyme</fullName>
        <shortName evidence="1">BE</shortName>
    </alternativeName>
</protein>
<keyword id="KW-0119">Carbohydrate metabolism</keyword>
<keyword id="KW-0320">Glycogen biosynthesis</keyword>
<keyword id="KW-0321">Glycogen metabolism</keyword>
<keyword id="KW-0328">Glycosyltransferase</keyword>
<keyword id="KW-1185">Reference proteome</keyword>
<keyword id="KW-0808">Transferase</keyword>
<organism>
    <name type="scientific">Methylococcus capsulatus (strain ATCC 33009 / NCIMB 11132 / Bath)</name>
    <dbReference type="NCBI Taxonomy" id="243233"/>
    <lineage>
        <taxon>Bacteria</taxon>
        <taxon>Pseudomonadati</taxon>
        <taxon>Pseudomonadota</taxon>
        <taxon>Gammaproteobacteria</taxon>
        <taxon>Methylococcales</taxon>
        <taxon>Methylococcaceae</taxon>
        <taxon>Methylococcus</taxon>
    </lineage>
</organism>
<proteinExistence type="inferred from homology"/>